<protein>
    <recommendedName>
        <fullName>Cysteine-rich receptor-like protein kinase 11</fullName>
        <shortName>Cysteine-rich RLK11</shortName>
        <ecNumber>2.7.11.-</ecNumber>
    </recommendedName>
    <alternativeName>
        <fullName>Receptor-like protein kinase 3</fullName>
    </alternativeName>
</protein>
<dbReference type="EC" id="2.7.11.-"/>
<dbReference type="EMBL" id="AJ011674">
    <property type="protein sequence ID" value="CAA09731.1"/>
    <property type="molecule type" value="mRNA"/>
</dbReference>
<dbReference type="EMBL" id="AL022347">
    <property type="protein sequence ID" value="CAA18466.1"/>
    <property type="status" value="ALT_SEQ"/>
    <property type="molecule type" value="Genomic_DNA"/>
</dbReference>
<dbReference type="EMBL" id="AL161558">
    <property type="protein sequence ID" value="CAB79274.1"/>
    <property type="status" value="ALT_SEQ"/>
    <property type="molecule type" value="Genomic_DNA"/>
</dbReference>
<dbReference type="EMBL" id="CP002687">
    <property type="protein sequence ID" value="AEE84720.1"/>
    <property type="molecule type" value="Genomic_DNA"/>
</dbReference>
<dbReference type="PIR" id="T04836">
    <property type="entry name" value="T04836"/>
</dbReference>
<dbReference type="RefSeq" id="NP_194050.2">
    <property type="nucleotide sequence ID" value="NM_118448.4"/>
</dbReference>
<dbReference type="SMR" id="Q9ZP16"/>
<dbReference type="BioGRID" id="13707">
    <property type="interactions" value="8"/>
</dbReference>
<dbReference type="FunCoup" id="Q9ZP16">
    <property type="interactions" value="196"/>
</dbReference>
<dbReference type="IntAct" id="Q9ZP16">
    <property type="interactions" value="8"/>
</dbReference>
<dbReference type="STRING" id="3702.Q9ZP16"/>
<dbReference type="GlyCosmos" id="Q9ZP16">
    <property type="glycosylation" value="8 sites, No reported glycans"/>
</dbReference>
<dbReference type="GlyGen" id="Q9ZP16">
    <property type="glycosylation" value="8 sites"/>
</dbReference>
<dbReference type="PaxDb" id="3702-AT4G23190.1"/>
<dbReference type="ProteomicsDB" id="222678"/>
<dbReference type="EnsemblPlants" id="AT4G23190.1">
    <property type="protein sequence ID" value="AT4G23190.1"/>
    <property type="gene ID" value="AT4G23190"/>
</dbReference>
<dbReference type="GeneID" id="828418"/>
<dbReference type="Gramene" id="AT4G23190.1">
    <property type="protein sequence ID" value="AT4G23190.1"/>
    <property type="gene ID" value="AT4G23190"/>
</dbReference>
<dbReference type="KEGG" id="ath:AT4G23190"/>
<dbReference type="Araport" id="AT4G23190"/>
<dbReference type="TAIR" id="AT4G23190">
    <property type="gene designation" value="CRK11"/>
</dbReference>
<dbReference type="eggNOG" id="ENOG502QWDY">
    <property type="taxonomic scope" value="Eukaryota"/>
</dbReference>
<dbReference type="HOGENOM" id="CLU_000288_35_2_1"/>
<dbReference type="InParanoid" id="Q9ZP16"/>
<dbReference type="PhylomeDB" id="Q9ZP16"/>
<dbReference type="PRO" id="PR:Q9ZP16"/>
<dbReference type="Proteomes" id="UP000006548">
    <property type="component" value="Chromosome 4"/>
</dbReference>
<dbReference type="ExpressionAtlas" id="Q9ZP16">
    <property type="expression patterns" value="baseline and differential"/>
</dbReference>
<dbReference type="GO" id="GO:0016020">
    <property type="term" value="C:membrane"/>
    <property type="evidence" value="ECO:0000250"/>
    <property type="project" value="TAIR"/>
</dbReference>
<dbReference type="GO" id="GO:0005524">
    <property type="term" value="F:ATP binding"/>
    <property type="evidence" value="ECO:0007669"/>
    <property type="project" value="UniProtKB-KW"/>
</dbReference>
<dbReference type="GO" id="GO:0004672">
    <property type="term" value="F:protein kinase activity"/>
    <property type="evidence" value="ECO:0000250"/>
    <property type="project" value="TAIR"/>
</dbReference>
<dbReference type="GO" id="GO:0106310">
    <property type="term" value="F:protein serine kinase activity"/>
    <property type="evidence" value="ECO:0007669"/>
    <property type="project" value="RHEA"/>
</dbReference>
<dbReference type="GO" id="GO:0004674">
    <property type="term" value="F:protein serine/threonine kinase activity"/>
    <property type="evidence" value="ECO:0007669"/>
    <property type="project" value="UniProtKB-KW"/>
</dbReference>
<dbReference type="GO" id="GO:0042742">
    <property type="term" value="P:defense response to bacterium"/>
    <property type="evidence" value="ECO:0000270"/>
    <property type="project" value="TAIR"/>
</dbReference>
<dbReference type="GO" id="GO:0006979">
    <property type="term" value="P:response to oxidative stress"/>
    <property type="evidence" value="ECO:0000270"/>
    <property type="project" value="TAIR"/>
</dbReference>
<dbReference type="CDD" id="cd23509">
    <property type="entry name" value="Gnk2-like"/>
    <property type="match status" value="2"/>
</dbReference>
<dbReference type="CDD" id="cd14066">
    <property type="entry name" value="STKc_IRAK"/>
    <property type="match status" value="1"/>
</dbReference>
<dbReference type="FunFam" id="3.30.200.20:FF:000142">
    <property type="entry name" value="Cysteine-rich receptor-like protein kinase 10"/>
    <property type="match status" value="1"/>
</dbReference>
<dbReference type="FunFam" id="1.10.510.10:FF:000129">
    <property type="entry name" value="cysteine-rich receptor-like protein kinase 10"/>
    <property type="match status" value="1"/>
</dbReference>
<dbReference type="FunFam" id="3.30.430.20:FF:000007">
    <property type="entry name" value="Cysteine-rich receptor-like protein kinase 11"/>
    <property type="match status" value="1"/>
</dbReference>
<dbReference type="FunFam" id="3.30.430.20:FF:000003">
    <property type="entry name" value="Cysteine-rich RLK (RECEPTOR-like protein kinase) 10"/>
    <property type="match status" value="1"/>
</dbReference>
<dbReference type="Gene3D" id="3.30.430.20">
    <property type="entry name" value="Gnk2 domain, C-X8-C-X2-C motif"/>
    <property type="match status" value="2"/>
</dbReference>
<dbReference type="Gene3D" id="3.30.200.20">
    <property type="entry name" value="Phosphorylase Kinase, domain 1"/>
    <property type="match status" value="1"/>
</dbReference>
<dbReference type="Gene3D" id="1.10.510.10">
    <property type="entry name" value="Transferase(Phosphotransferase) domain 1"/>
    <property type="match status" value="1"/>
</dbReference>
<dbReference type="InterPro" id="IPR002902">
    <property type="entry name" value="GNK2"/>
</dbReference>
<dbReference type="InterPro" id="IPR038408">
    <property type="entry name" value="GNK2_sf"/>
</dbReference>
<dbReference type="InterPro" id="IPR011009">
    <property type="entry name" value="Kinase-like_dom_sf"/>
</dbReference>
<dbReference type="InterPro" id="IPR000719">
    <property type="entry name" value="Prot_kinase_dom"/>
</dbReference>
<dbReference type="InterPro" id="IPR017441">
    <property type="entry name" value="Protein_kinase_ATP_BS"/>
</dbReference>
<dbReference type="InterPro" id="IPR001245">
    <property type="entry name" value="Ser-Thr/Tyr_kinase_cat_dom"/>
</dbReference>
<dbReference type="InterPro" id="IPR008271">
    <property type="entry name" value="Ser/Thr_kinase_AS"/>
</dbReference>
<dbReference type="PANTHER" id="PTHR27002:SF1028">
    <property type="entry name" value="CYSTEINE-RICH RECEPTOR-LIKE PROTEIN KINASE 11"/>
    <property type="match status" value="1"/>
</dbReference>
<dbReference type="PANTHER" id="PTHR27002">
    <property type="entry name" value="RECEPTOR-LIKE SERINE/THREONINE-PROTEIN KINASE SD1-8"/>
    <property type="match status" value="1"/>
</dbReference>
<dbReference type="Pfam" id="PF07714">
    <property type="entry name" value="PK_Tyr_Ser-Thr"/>
    <property type="match status" value="1"/>
</dbReference>
<dbReference type="Pfam" id="PF01657">
    <property type="entry name" value="Stress-antifung"/>
    <property type="match status" value="2"/>
</dbReference>
<dbReference type="SMART" id="SM00220">
    <property type="entry name" value="S_TKc"/>
    <property type="match status" value="1"/>
</dbReference>
<dbReference type="SUPFAM" id="SSF56112">
    <property type="entry name" value="Protein kinase-like (PK-like)"/>
    <property type="match status" value="1"/>
</dbReference>
<dbReference type="PROSITE" id="PS51473">
    <property type="entry name" value="GNK2"/>
    <property type="match status" value="2"/>
</dbReference>
<dbReference type="PROSITE" id="PS00107">
    <property type="entry name" value="PROTEIN_KINASE_ATP"/>
    <property type="match status" value="1"/>
</dbReference>
<dbReference type="PROSITE" id="PS50011">
    <property type="entry name" value="PROTEIN_KINASE_DOM"/>
    <property type="match status" value="1"/>
</dbReference>
<dbReference type="PROSITE" id="PS00108">
    <property type="entry name" value="PROTEIN_KINASE_ST"/>
    <property type="match status" value="1"/>
</dbReference>
<comment type="catalytic activity">
    <reaction>
        <text>L-seryl-[protein] + ATP = O-phospho-L-seryl-[protein] + ADP + H(+)</text>
        <dbReference type="Rhea" id="RHEA:17989"/>
        <dbReference type="Rhea" id="RHEA-COMP:9863"/>
        <dbReference type="Rhea" id="RHEA-COMP:11604"/>
        <dbReference type="ChEBI" id="CHEBI:15378"/>
        <dbReference type="ChEBI" id="CHEBI:29999"/>
        <dbReference type="ChEBI" id="CHEBI:30616"/>
        <dbReference type="ChEBI" id="CHEBI:83421"/>
        <dbReference type="ChEBI" id="CHEBI:456216"/>
    </reaction>
</comment>
<comment type="catalytic activity">
    <reaction>
        <text>L-threonyl-[protein] + ATP = O-phospho-L-threonyl-[protein] + ADP + H(+)</text>
        <dbReference type="Rhea" id="RHEA:46608"/>
        <dbReference type="Rhea" id="RHEA-COMP:11060"/>
        <dbReference type="Rhea" id="RHEA-COMP:11605"/>
        <dbReference type="ChEBI" id="CHEBI:15378"/>
        <dbReference type="ChEBI" id="CHEBI:30013"/>
        <dbReference type="ChEBI" id="CHEBI:30616"/>
        <dbReference type="ChEBI" id="CHEBI:61977"/>
        <dbReference type="ChEBI" id="CHEBI:456216"/>
    </reaction>
</comment>
<comment type="subcellular location">
    <subcellularLocation>
        <location evidence="9">Membrane</location>
        <topology evidence="9">Single-pass membrane protein</topology>
    </subcellularLocation>
</comment>
<comment type="tissue specificity">
    <text evidence="7">Detected in root, stem, leaf and flower.</text>
</comment>
<comment type="induction">
    <text evidence="7 8">By salicylic acid (SA), by a bacterial pathogen infection or by oxidative stress. May be regulated by WRKY DNA-binding proteins at the transcriptional level.</text>
</comment>
<comment type="similarity">
    <text evidence="3">Belongs to the protein kinase superfamily. Ser/Thr protein kinase family. CRK subfamily.</text>
</comment>
<comment type="sequence caution" evidence="9">
    <conflict type="erroneous gene model prediction">
        <sequence resource="EMBL-CDS" id="CAA18466"/>
    </conflict>
</comment>
<comment type="sequence caution" evidence="9">
    <conflict type="erroneous gene model prediction">
        <sequence resource="EMBL-CDS" id="CAB79274"/>
    </conflict>
</comment>
<reference key="1">
    <citation type="journal article" date="1999" name="Plant J.">
        <title>Characterization of an Arabidopsis thaliana receptor-like protein kinase gene activated by oxidative stress and pathogen attack.</title>
        <authorList>
            <person name="Czernic P."/>
            <person name="Visser B."/>
            <person name="Sun W."/>
            <person name="Savoure A."/>
            <person name="Deslandes L."/>
            <person name="Marco Y."/>
            <person name="van Montagu M."/>
            <person name="Verbruggen N."/>
        </authorList>
    </citation>
    <scope>NUCLEOTIDE SEQUENCE [MRNA]</scope>
    <scope>TISSUE SPECIFICITY</scope>
    <scope>INDUCTION</scope>
</reference>
<reference key="2">
    <citation type="journal article" date="1999" name="Nature">
        <title>Sequence and analysis of chromosome 4 of the plant Arabidopsis thaliana.</title>
        <authorList>
            <person name="Mayer K.F.X."/>
            <person name="Schueller C."/>
            <person name="Wambutt R."/>
            <person name="Murphy G."/>
            <person name="Volckaert G."/>
            <person name="Pohl T."/>
            <person name="Duesterhoeft A."/>
            <person name="Stiekema W."/>
            <person name="Entian K.-D."/>
            <person name="Terryn N."/>
            <person name="Harris B."/>
            <person name="Ansorge W."/>
            <person name="Brandt P."/>
            <person name="Grivell L.A."/>
            <person name="Rieger M."/>
            <person name="Weichselgartner M."/>
            <person name="de Simone V."/>
            <person name="Obermaier B."/>
            <person name="Mache R."/>
            <person name="Mueller M."/>
            <person name="Kreis M."/>
            <person name="Delseny M."/>
            <person name="Puigdomenech P."/>
            <person name="Watson M."/>
            <person name="Schmidtheini T."/>
            <person name="Reichert B."/>
            <person name="Portetelle D."/>
            <person name="Perez-Alonso M."/>
            <person name="Boutry M."/>
            <person name="Bancroft I."/>
            <person name="Vos P."/>
            <person name="Hoheisel J."/>
            <person name="Zimmermann W."/>
            <person name="Wedler H."/>
            <person name="Ridley P."/>
            <person name="Langham S.-A."/>
            <person name="McCullagh B."/>
            <person name="Bilham L."/>
            <person name="Robben J."/>
            <person name="van der Schueren J."/>
            <person name="Grymonprez B."/>
            <person name="Chuang Y.-J."/>
            <person name="Vandenbussche F."/>
            <person name="Braeken M."/>
            <person name="Weltjens I."/>
            <person name="Voet M."/>
            <person name="Bastiaens I."/>
            <person name="Aert R."/>
            <person name="Defoor E."/>
            <person name="Weitzenegger T."/>
            <person name="Bothe G."/>
            <person name="Ramsperger U."/>
            <person name="Hilbert H."/>
            <person name="Braun M."/>
            <person name="Holzer E."/>
            <person name="Brandt A."/>
            <person name="Peters S."/>
            <person name="van Staveren M."/>
            <person name="Dirkse W."/>
            <person name="Mooijman P."/>
            <person name="Klein Lankhorst R."/>
            <person name="Rose M."/>
            <person name="Hauf J."/>
            <person name="Koetter P."/>
            <person name="Berneiser S."/>
            <person name="Hempel S."/>
            <person name="Feldpausch M."/>
            <person name="Lamberth S."/>
            <person name="Van den Daele H."/>
            <person name="De Keyser A."/>
            <person name="Buysshaert C."/>
            <person name="Gielen J."/>
            <person name="Villarroel R."/>
            <person name="De Clercq R."/>
            <person name="van Montagu M."/>
            <person name="Rogers J."/>
            <person name="Cronin A."/>
            <person name="Quail M.A."/>
            <person name="Bray-Allen S."/>
            <person name="Clark L."/>
            <person name="Doggett J."/>
            <person name="Hall S."/>
            <person name="Kay M."/>
            <person name="Lennard N."/>
            <person name="McLay K."/>
            <person name="Mayes R."/>
            <person name="Pettett A."/>
            <person name="Rajandream M.A."/>
            <person name="Lyne M."/>
            <person name="Benes V."/>
            <person name="Rechmann S."/>
            <person name="Borkova D."/>
            <person name="Bloecker H."/>
            <person name="Scharfe M."/>
            <person name="Grimm M."/>
            <person name="Loehnert T.-H."/>
            <person name="Dose S."/>
            <person name="de Haan M."/>
            <person name="Maarse A.C."/>
            <person name="Schaefer M."/>
            <person name="Mueller-Auer S."/>
            <person name="Gabel C."/>
            <person name="Fuchs M."/>
            <person name="Fartmann B."/>
            <person name="Granderath K."/>
            <person name="Dauner D."/>
            <person name="Herzl A."/>
            <person name="Neumann S."/>
            <person name="Argiriou A."/>
            <person name="Vitale D."/>
            <person name="Liguori R."/>
            <person name="Piravandi E."/>
            <person name="Massenet O."/>
            <person name="Quigley F."/>
            <person name="Clabauld G."/>
            <person name="Muendlein A."/>
            <person name="Felber R."/>
            <person name="Schnabl S."/>
            <person name="Hiller R."/>
            <person name="Schmidt W."/>
            <person name="Lecharny A."/>
            <person name="Aubourg S."/>
            <person name="Chefdor F."/>
            <person name="Cooke R."/>
            <person name="Berger C."/>
            <person name="Monfort A."/>
            <person name="Casacuberta E."/>
            <person name="Gibbons T."/>
            <person name="Weber N."/>
            <person name="Vandenbol M."/>
            <person name="Bargues M."/>
            <person name="Terol J."/>
            <person name="Torres A."/>
            <person name="Perez-Perez A."/>
            <person name="Purnelle B."/>
            <person name="Bent E."/>
            <person name="Johnson S."/>
            <person name="Tacon D."/>
            <person name="Jesse T."/>
            <person name="Heijnen L."/>
            <person name="Schwarz S."/>
            <person name="Scholler P."/>
            <person name="Heber S."/>
            <person name="Francs P."/>
            <person name="Bielke C."/>
            <person name="Frishman D."/>
            <person name="Haase D."/>
            <person name="Lemcke K."/>
            <person name="Mewes H.-W."/>
            <person name="Stocker S."/>
            <person name="Zaccaria P."/>
            <person name="Bevan M."/>
            <person name="Wilson R.K."/>
            <person name="de la Bastide M."/>
            <person name="Habermann K."/>
            <person name="Parnell L."/>
            <person name="Dedhia N."/>
            <person name="Gnoj L."/>
            <person name="Schutz K."/>
            <person name="Huang E."/>
            <person name="Spiegel L."/>
            <person name="Sekhon M."/>
            <person name="Murray J."/>
            <person name="Sheet P."/>
            <person name="Cordes M."/>
            <person name="Abu-Threideh J."/>
            <person name="Stoneking T."/>
            <person name="Kalicki J."/>
            <person name="Graves T."/>
            <person name="Harmon G."/>
            <person name="Edwards J."/>
            <person name="Latreille P."/>
            <person name="Courtney L."/>
            <person name="Cloud J."/>
            <person name="Abbott A."/>
            <person name="Scott K."/>
            <person name="Johnson D."/>
            <person name="Minx P."/>
            <person name="Bentley D."/>
            <person name="Fulton B."/>
            <person name="Miller N."/>
            <person name="Greco T."/>
            <person name="Kemp K."/>
            <person name="Kramer J."/>
            <person name="Fulton L."/>
            <person name="Mardis E."/>
            <person name="Dante M."/>
            <person name="Pepin K."/>
            <person name="Hillier L.W."/>
            <person name="Nelson J."/>
            <person name="Spieth J."/>
            <person name="Ryan E."/>
            <person name="Andrews S."/>
            <person name="Geisel C."/>
            <person name="Layman D."/>
            <person name="Du H."/>
            <person name="Ali J."/>
            <person name="Berghoff A."/>
            <person name="Jones K."/>
            <person name="Drone K."/>
            <person name="Cotton M."/>
            <person name="Joshu C."/>
            <person name="Antonoiu B."/>
            <person name="Zidanic M."/>
            <person name="Strong C."/>
            <person name="Sun H."/>
            <person name="Lamar B."/>
            <person name="Yordan C."/>
            <person name="Ma P."/>
            <person name="Zhong J."/>
            <person name="Preston R."/>
            <person name="Vil D."/>
            <person name="Shekher M."/>
            <person name="Matero A."/>
            <person name="Shah R."/>
            <person name="Swaby I.K."/>
            <person name="O'Shaughnessy A."/>
            <person name="Rodriguez M."/>
            <person name="Hoffman J."/>
            <person name="Till S."/>
            <person name="Granat S."/>
            <person name="Shohdy N."/>
            <person name="Hasegawa A."/>
            <person name="Hameed A."/>
            <person name="Lodhi M."/>
            <person name="Johnson A."/>
            <person name="Chen E."/>
            <person name="Marra M.A."/>
            <person name="Martienssen R."/>
            <person name="McCombie W.R."/>
        </authorList>
    </citation>
    <scope>NUCLEOTIDE SEQUENCE [LARGE SCALE GENOMIC DNA]</scope>
    <source>
        <strain>cv. Columbia</strain>
    </source>
</reference>
<reference key="3">
    <citation type="journal article" date="2017" name="Plant J.">
        <title>Araport11: a complete reannotation of the Arabidopsis thaliana reference genome.</title>
        <authorList>
            <person name="Cheng C.Y."/>
            <person name="Krishnakumar V."/>
            <person name="Chan A.P."/>
            <person name="Thibaud-Nissen F."/>
            <person name="Schobel S."/>
            <person name="Town C.D."/>
        </authorList>
    </citation>
    <scope>GENOME REANNOTATION</scope>
    <source>
        <strain>cv. Columbia</strain>
    </source>
</reference>
<reference key="4">
    <citation type="journal article" date="2000" name="Plant J.">
        <title>Identification of genes encoding receptor-like protein kinases as possible targets of pathogen- and salicylic acid-induced WRKY DNA-binding proteins in Arabidopsis.</title>
        <authorList>
            <person name="Du L."/>
            <person name="Chen Z."/>
        </authorList>
    </citation>
    <scope>INDUCTION</scope>
</reference>
<reference key="5">
    <citation type="journal article" date="2001" name="Plant Physiol.">
        <title>A superfamily of proteins with novel cysteine-rich repeats.</title>
        <authorList>
            <person name="Chen Z."/>
        </authorList>
    </citation>
    <scope>GENE FAMILY ORGANIZATION</scope>
    <scope>NOMENCLATURE</scope>
</reference>
<gene>
    <name type="primary">CRK11</name>
    <name type="synonym">RLK3</name>
    <name type="ordered locus">At4g23190</name>
    <name type="ORF">F21P8.80</name>
</gene>
<evidence type="ECO:0000250" key="1">
    <source>
        <dbReference type="UniProtKB" id="O48814"/>
    </source>
</evidence>
<evidence type="ECO:0000255" key="2"/>
<evidence type="ECO:0000255" key="3">
    <source>
        <dbReference type="PROSITE-ProRule" id="PRU00159"/>
    </source>
</evidence>
<evidence type="ECO:0000255" key="4">
    <source>
        <dbReference type="PROSITE-ProRule" id="PRU00806"/>
    </source>
</evidence>
<evidence type="ECO:0000255" key="5">
    <source>
        <dbReference type="PROSITE-ProRule" id="PRU10027"/>
    </source>
</evidence>
<evidence type="ECO:0000256" key="6">
    <source>
        <dbReference type="SAM" id="MobiDB-lite"/>
    </source>
</evidence>
<evidence type="ECO:0000269" key="7">
    <source>
    </source>
</evidence>
<evidence type="ECO:0000269" key="8">
    <source>
    </source>
</evidence>
<evidence type="ECO:0000305" key="9"/>
<sequence>MKQRSLFSVLCFFFISFGVASVSAQTCTTDKGTFRPNGTYDVNRRLILSSLPSNVTDQDGLYYNGSIGQQPNRVYAIGMCIPGSTSEDCSDCIKKESEFFLKNCPNQTEAYSWPGEPTLCYVRYSNTSFSGSADLNPRNWLTNTGDLDSNLTEFTKIWEGLMGRMISAASTAKSTPSSSDNHYSADSAVLTPLLNIYALMQCTPDLSSGDCENCLRQSAIDYQSCCSQKRGGVVMRPSCFLRWDLYTYSNAFDNLTVASPPPEPPVTVPQPAGDQDNPTNNDSKGISAGVVVAITVPTVIAILILLVLGFVLFRRRKSYQRTKTESESDISTTDSLVYDFKTIEAATNKFSTSNKLGEGGFGAVYKGKLSNGTDVAVKRLSKKSGQGTREFRNEAVLVTKLQHRNLVRLLGFCLEREEQILIYEFVHNKSLDYFLFDPEKQSQLDWTRRYKIIGGIARGILYLHQDSRLKIIHRDLKASNILLDADMNPKIADFGLATIFGVEQTQGNTNRIAGTYAYMSPEYAMHGQYSMKSDIYSFGVLVLEIISGKKNSGVYQMDETSTAGNLVTYASRLWRNKSPLELVDPTFGRNYQSNEVTRCIHIALLCVQENPEDRPMLSTIILMLTSNTITLPVPRLPGFFPRSRQLKLVSEGSESDQYTSKSSSFSS</sequence>
<organism>
    <name type="scientific">Arabidopsis thaliana</name>
    <name type="common">Mouse-ear cress</name>
    <dbReference type="NCBI Taxonomy" id="3702"/>
    <lineage>
        <taxon>Eukaryota</taxon>
        <taxon>Viridiplantae</taxon>
        <taxon>Streptophyta</taxon>
        <taxon>Embryophyta</taxon>
        <taxon>Tracheophyta</taxon>
        <taxon>Spermatophyta</taxon>
        <taxon>Magnoliopsida</taxon>
        <taxon>eudicotyledons</taxon>
        <taxon>Gunneridae</taxon>
        <taxon>Pentapetalae</taxon>
        <taxon>rosids</taxon>
        <taxon>malvids</taxon>
        <taxon>Brassicales</taxon>
        <taxon>Brassicaceae</taxon>
        <taxon>Camelineae</taxon>
        <taxon>Arabidopsis</taxon>
    </lineage>
</organism>
<name>CRK11_ARATH</name>
<feature type="signal peptide" evidence="2">
    <location>
        <begin position="1"/>
        <end position="24"/>
    </location>
</feature>
<feature type="chain" id="PRO_0000295058" description="Cysteine-rich receptor-like protein kinase 11">
    <location>
        <begin position="25"/>
        <end position="667"/>
    </location>
</feature>
<feature type="topological domain" description="Extracellular" evidence="2">
    <location>
        <begin position="25"/>
        <end position="292"/>
    </location>
</feature>
<feature type="transmembrane region" description="Helical" evidence="2">
    <location>
        <begin position="293"/>
        <end position="313"/>
    </location>
</feature>
<feature type="topological domain" description="Cytoplasmic" evidence="2">
    <location>
        <begin position="314"/>
        <end position="667"/>
    </location>
</feature>
<feature type="domain" description="Gnk2-homologous 1" evidence="4">
    <location>
        <begin position="25"/>
        <end position="129"/>
    </location>
</feature>
<feature type="domain" description="Gnk2-homologous 2" evidence="4">
    <location>
        <begin position="135"/>
        <end position="248"/>
    </location>
</feature>
<feature type="domain" description="Protein kinase" evidence="3">
    <location>
        <begin position="350"/>
        <end position="629"/>
    </location>
</feature>
<feature type="region of interest" description="Disordered" evidence="6">
    <location>
        <begin position="259"/>
        <end position="282"/>
    </location>
</feature>
<feature type="compositionally biased region" description="Pro residues" evidence="6">
    <location>
        <begin position="259"/>
        <end position="268"/>
    </location>
</feature>
<feature type="active site" description="Proton acceptor" evidence="3 5">
    <location>
        <position position="475"/>
    </location>
</feature>
<feature type="binding site" evidence="3">
    <location>
        <begin position="356"/>
        <end position="364"/>
    </location>
    <ligand>
        <name>ATP</name>
        <dbReference type="ChEBI" id="CHEBI:30616"/>
    </ligand>
</feature>
<feature type="binding site" evidence="3">
    <location>
        <position position="378"/>
    </location>
    <ligand>
        <name>ATP</name>
        <dbReference type="ChEBI" id="CHEBI:30616"/>
    </ligand>
</feature>
<feature type="modified residue" description="Phosphotyrosine" evidence="1">
    <location>
        <position position="423"/>
    </location>
</feature>
<feature type="modified residue" description="Phosphoserine" evidence="1">
    <location>
        <position position="479"/>
    </location>
</feature>
<feature type="modified residue" description="Phosphothreonine" evidence="1">
    <location>
        <position position="515"/>
    </location>
</feature>
<feature type="modified residue" description="Phosphotyrosine" evidence="1">
    <location>
        <position position="523"/>
    </location>
</feature>
<feature type="glycosylation site" description="N-linked (GlcNAc...) asparagine" evidence="2">
    <location>
        <position position="37"/>
    </location>
</feature>
<feature type="glycosylation site" description="N-linked (GlcNAc...) asparagine" evidence="2">
    <location>
        <position position="54"/>
    </location>
</feature>
<feature type="glycosylation site" description="N-linked (GlcNAc...) asparagine" evidence="2">
    <location>
        <position position="64"/>
    </location>
</feature>
<feature type="glycosylation site" description="N-linked (GlcNAc...) asparagine" evidence="2">
    <location>
        <position position="106"/>
    </location>
</feature>
<feature type="glycosylation site" description="N-linked (GlcNAc...) asparagine" evidence="2">
    <location>
        <position position="126"/>
    </location>
</feature>
<feature type="glycosylation site" description="N-linked (GlcNAc...) asparagine" evidence="2">
    <location>
        <position position="150"/>
    </location>
</feature>
<feature type="glycosylation site" description="N-linked (GlcNAc...) asparagine" evidence="2">
    <location>
        <position position="254"/>
    </location>
</feature>
<feature type="glycosylation site" description="N-linked (GlcNAc...) asparagine" evidence="2">
    <location>
        <position position="281"/>
    </location>
</feature>
<feature type="sequence conflict" description="In Ref. 1; CAA09731." evidence="9" ref="1">
    <original>P</original>
    <variation>S</variation>
    <location>
        <position position="264"/>
    </location>
</feature>
<feature type="sequence conflict" description="In Ref. 1; CAA09731." evidence="9" ref="1">
    <original>Y</original>
    <variation>N</variation>
    <location>
        <position position="319"/>
    </location>
</feature>
<feature type="sequence conflict" description="In Ref. 1; CAA09731." evidence="9" ref="1">
    <original>EA</original>
    <variation>DS</variation>
    <location>
        <begin position="394"/>
        <end position="395"/>
    </location>
</feature>
<keyword id="KW-0067">ATP-binding</keyword>
<keyword id="KW-0325">Glycoprotein</keyword>
<keyword id="KW-0418">Kinase</keyword>
<keyword id="KW-0472">Membrane</keyword>
<keyword id="KW-0547">Nucleotide-binding</keyword>
<keyword id="KW-0597">Phosphoprotein</keyword>
<keyword id="KW-0675">Receptor</keyword>
<keyword id="KW-1185">Reference proteome</keyword>
<keyword id="KW-0677">Repeat</keyword>
<keyword id="KW-0723">Serine/threonine-protein kinase</keyword>
<keyword id="KW-0732">Signal</keyword>
<keyword id="KW-0808">Transferase</keyword>
<keyword id="KW-0812">Transmembrane</keyword>
<keyword id="KW-1133">Transmembrane helix</keyword>
<accession>Q9ZP16</accession>
<accession>O65471</accession>
<proteinExistence type="evidence at transcript level"/>